<proteinExistence type="evidence at protein level"/>
<comment type="subcellular location">
    <subcellularLocation>
        <location evidence="1">Secreted</location>
        <location evidence="1">Cell wall</location>
    </subcellularLocation>
</comment>
<reference evidence="3" key="1">
    <citation type="journal article" date="1997" name="J. Biol. Chem.">
        <title>Differential extraction and protein sequencing reveals major differences in patterns of primary cell wall proteins from plants.</title>
        <authorList>
            <person name="Robertson D."/>
            <person name="Mitchell G.P."/>
            <person name="Gilroy J.S."/>
            <person name="Gerrish C."/>
            <person name="Bolwell G.P."/>
            <person name="Slabas A.R."/>
        </authorList>
    </citation>
    <scope>PROTEIN SEQUENCE</scope>
    <scope>SUBCELLULAR LOCATION</scope>
    <source>
        <strain>cv. Landsberg erecta</strain>
    </source>
</reference>
<keyword id="KW-0134">Cell wall</keyword>
<keyword id="KW-0903">Direct protein sequencing</keyword>
<keyword id="KW-0964">Secreted</keyword>
<name>CWP08_ARATH</name>
<feature type="chain" id="PRO_0000079648" description="31 kDa cell wall protein">
    <location>
        <begin position="1"/>
        <end position="5" status="greater than"/>
    </location>
</feature>
<feature type="non-terminal residue" evidence="2">
    <location>
        <position position="5"/>
    </location>
</feature>
<evidence type="ECO:0000269" key="1">
    <source>
    </source>
</evidence>
<evidence type="ECO:0000303" key="2">
    <source>
    </source>
</evidence>
<evidence type="ECO:0000305" key="3"/>
<protein>
    <recommendedName>
        <fullName>31 kDa cell wall protein</fullName>
    </recommendedName>
</protein>
<accession>P80832</accession>
<dbReference type="GO" id="GO:0005576">
    <property type="term" value="C:extracellular region"/>
    <property type="evidence" value="ECO:0007669"/>
    <property type="project" value="UniProtKB-KW"/>
</dbReference>
<sequence length="5" mass="516">IALTV</sequence>
<organism>
    <name type="scientific">Arabidopsis thaliana</name>
    <name type="common">Mouse-ear cress</name>
    <dbReference type="NCBI Taxonomy" id="3702"/>
    <lineage>
        <taxon>Eukaryota</taxon>
        <taxon>Viridiplantae</taxon>
        <taxon>Streptophyta</taxon>
        <taxon>Embryophyta</taxon>
        <taxon>Tracheophyta</taxon>
        <taxon>Spermatophyta</taxon>
        <taxon>Magnoliopsida</taxon>
        <taxon>eudicotyledons</taxon>
        <taxon>Gunneridae</taxon>
        <taxon>Pentapetalae</taxon>
        <taxon>rosids</taxon>
        <taxon>malvids</taxon>
        <taxon>Brassicales</taxon>
        <taxon>Brassicaceae</taxon>
        <taxon>Camelineae</taxon>
        <taxon>Arabidopsis</taxon>
    </lineage>
</organism>